<organism>
    <name type="scientific">Nitrosospira multiformis (strain ATCC 25196 / NCIMB 11849 / C 71)</name>
    <dbReference type="NCBI Taxonomy" id="323848"/>
    <lineage>
        <taxon>Bacteria</taxon>
        <taxon>Pseudomonadati</taxon>
        <taxon>Pseudomonadota</taxon>
        <taxon>Betaproteobacteria</taxon>
        <taxon>Nitrosomonadales</taxon>
        <taxon>Nitrosomonadaceae</taxon>
        <taxon>Nitrosospira</taxon>
    </lineage>
</organism>
<name>YBEY_NITMU</name>
<keyword id="KW-0963">Cytoplasm</keyword>
<keyword id="KW-0255">Endonuclease</keyword>
<keyword id="KW-0378">Hydrolase</keyword>
<keyword id="KW-0479">Metal-binding</keyword>
<keyword id="KW-0540">Nuclease</keyword>
<keyword id="KW-1185">Reference proteome</keyword>
<keyword id="KW-0690">Ribosome biogenesis</keyword>
<keyword id="KW-0698">rRNA processing</keyword>
<keyword id="KW-0862">Zinc</keyword>
<sequence length="189" mass="21268">MKERSSSPGTPDSGRRARPKPAKLKMTVQYATSTREPLPSRALLRKWVKAALAHDAEIALRIVDEEEGHRLNRDFRNKDYATNVLTFVYRDGQIHPDSPLGEKRGAYPLTGDIVLCAPVVENEAGQQQKDLMAHYAHLTVHGVLHLQGYDHQEDEDAKNMEETETRILAWLGYEDPYAGYQLAEAVDCG</sequence>
<dbReference type="EC" id="3.1.-.-" evidence="1"/>
<dbReference type="EMBL" id="CP000103">
    <property type="protein sequence ID" value="ABB75984.1"/>
    <property type="molecule type" value="Genomic_DNA"/>
</dbReference>
<dbReference type="RefSeq" id="WP_011381976.1">
    <property type="nucleotide sequence ID" value="NC_007614.1"/>
</dbReference>
<dbReference type="SMR" id="Q2Y5I7"/>
<dbReference type="STRING" id="323848.Nmul_A2697"/>
<dbReference type="KEGG" id="nmu:Nmul_A2697"/>
<dbReference type="eggNOG" id="COG0319">
    <property type="taxonomic scope" value="Bacteria"/>
</dbReference>
<dbReference type="HOGENOM" id="CLU_106710_0_1_4"/>
<dbReference type="OrthoDB" id="9807740at2"/>
<dbReference type="Proteomes" id="UP000002718">
    <property type="component" value="Chromosome"/>
</dbReference>
<dbReference type="GO" id="GO:0005737">
    <property type="term" value="C:cytoplasm"/>
    <property type="evidence" value="ECO:0007669"/>
    <property type="project" value="UniProtKB-SubCell"/>
</dbReference>
<dbReference type="GO" id="GO:0004222">
    <property type="term" value="F:metalloendopeptidase activity"/>
    <property type="evidence" value="ECO:0007669"/>
    <property type="project" value="InterPro"/>
</dbReference>
<dbReference type="GO" id="GO:0004521">
    <property type="term" value="F:RNA endonuclease activity"/>
    <property type="evidence" value="ECO:0007669"/>
    <property type="project" value="UniProtKB-UniRule"/>
</dbReference>
<dbReference type="GO" id="GO:0008270">
    <property type="term" value="F:zinc ion binding"/>
    <property type="evidence" value="ECO:0007669"/>
    <property type="project" value="UniProtKB-UniRule"/>
</dbReference>
<dbReference type="GO" id="GO:0006364">
    <property type="term" value="P:rRNA processing"/>
    <property type="evidence" value="ECO:0007669"/>
    <property type="project" value="UniProtKB-UniRule"/>
</dbReference>
<dbReference type="Gene3D" id="3.40.390.30">
    <property type="entry name" value="Metalloproteases ('zincins'), catalytic domain"/>
    <property type="match status" value="1"/>
</dbReference>
<dbReference type="HAMAP" id="MF_00009">
    <property type="entry name" value="Endoribonucl_YbeY"/>
    <property type="match status" value="1"/>
</dbReference>
<dbReference type="InterPro" id="IPR023091">
    <property type="entry name" value="MetalPrtase_cat_dom_sf_prd"/>
</dbReference>
<dbReference type="InterPro" id="IPR002036">
    <property type="entry name" value="YbeY"/>
</dbReference>
<dbReference type="InterPro" id="IPR020549">
    <property type="entry name" value="YbeY_CS"/>
</dbReference>
<dbReference type="NCBIfam" id="TIGR00043">
    <property type="entry name" value="rRNA maturation RNase YbeY"/>
    <property type="match status" value="1"/>
</dbReference>
<dbReference type="PANTHER" id="PTHR46986">
    <property type="entry name" value="ENDORIBONUCLEASE YBEY, CHLOROPLASTIC"/>
    <property type="match status" value="1"/>
</dbReference>
<dbReference type="PANTHER" id="PTHR46986:SF1">
    <property type="entry name" value="ENDORIBONUCLEASE YBEY, CHLOROPLASTIC"/>
    <property type="match status" value="1"/>
</dbReference>
<dbReference type="Pfam" id="PF02130">
    <property type="entry name" value="YbeY"/>
    <property type="match status" value="1"/>
</dbReference>
<dbReference type="SUPFAM" id="SSF55486">
    <property type="entry name" value="Metalloproteases ('zincins'), catalytic domain"/>
    <property type="match status" value="1"/>
</dbReference>
<dbReference type="PROSITE" id="PS01306">
    <property type="entry name" value="UPF0054"/>
    <property type="match status" value="1"/>
</dbReference>
<accession>Q2Y5I7</accession>
<evidence type="ECO:0000255" key="1">
    <source>
        <dbReference type="HAMAP-Rule" id="MF_00009"/>
    </source>
</evidence>
<evidence type="ECO:0000256" key="2">
    <source>
        <dbReference type="SAM" id="MobiDB-lite"/>
    </source>
</evidence>
<reference key="1">
    <citation type="submission" date="2005-08" db="EMBL/GenBank/DDBJ databases">
        <title>Complete sequence of chromosome 1 of Nitrosospira multiformis ATCC 25196.</title>
        <authorList>
            <person name="Copeland A."/>
            <person name="Lucas S."/>
            <person name="Lapidus A."/>
            <person name="Barry K."/>
            <person name="Detter J.C."/>
            <person name="Glavina T."/>
            <person name="Hammon N."/>
            <person name="Israni S."/>
            <person name="Pitluck S."/>
            <person name="Chain P."/>
            <person name="Malfatti S."/>
            <person name="Shin M."/>
            <person name="Vergez L."/>
            <person name="Schmutz J."/>
            <person name="Larimer F."/>
            <person name="Land M."/>
            <person name="Hauser L."/>
            <person name="Kyrpides N."/>
            <person name="Lykidis A."/>
            <person name="Richardson P."/>
        </authorList>
    </citation>
    <scope>NUCLEOTIDE SEQUENCE [LARGE SCALE GENOMIC DNA]</scope>
    <source>
        <strain>ATCC 25196 / NCIMB 11849 / C 71</strain>
    </source>
</reference>
<gene>
    <name evidence="1" type="primary">ybeY</name>
    <name type="ordered locus">Nmul_A2697</name>
</gene>
<feature type="chain" id="PRO_0000284259" description="Endoribonuclease YbeY">
    <location>
        <begin position="1"/>
        <end position="189"/>
    </location>
</feature>
<feature type="region of interest" description="Disordered" evidence="2">
    <location>
        <begin position="1"/>
        <end position="23"/>
    </location>
</feature>
<feature type="compositionally biased region" description="Polar residues" evidence="2">
    <location>
        <begin position="1"/>
        <end position="10"/>
    </location>
</feature>
<feature type="binding site" evidence="1">
    <location>
        <position position="141"/>
    </location>
    <ligand>
        <name>Zn(2+)</name>
        <dbReference type="ChEBI" id="CHEBI:29105"/>
        <note>catalytic</note>
    </ligand>
</feature>
<feature type="binding site" evidence="1">
    <location>
        <position position="145"/>
    </location>
    <ligand>
        <name>Zn(2+)</name>
        <dbReference type="ChEBI" id="CHEBI:29105"/>
        <note>catalytic</note>
    </ligand>
</feature>
<feature type="binding site" evidence="1">
    <location>
        <position position="151"/>
    </location>
    <ligand>
        <name>Zn(2+)</name>
        <dbReference type="ChEBI" id="CHEBI:29105"/>
        <note>catalytic</note>
    </ligand>
</feature>
<comment type="function">
    <text evidence="1">Single strand-specific metallo-endoribonuclease involved in late-stage 70S ribosome quality control and in maturation of the 3' terminus of the 16S rRNA.</text>
</comment>
<comment type="cofactor">
    <cofactor evidence="1">
        <name>Zn(2+)</name>
        <dbReference type="ChEBI" id="CHEBI:29105"/>
    </cofactor>
    <text evidence="1">Binds 1 zinc ion.</text>
</comment>
<comment type="subcellular location">
    <subcellularLocation>
        <location evidence="1">Cytoplasm</location>
    </subcellularLocation>
</comment>
<comment type="similarity">
    <text evidence="1">Belongs to the endoribonuclease YbeY family.</text>
</comment>
<proteinExistence type="inferred from homology"/>
<protein>
    <recommendedName>
        <fullName evidence="1">Endoribonuclease YbeY</fullName>
        <ecNumber evidence="1">3.1.-.-</ecNumber>
    </recommendedName>
</protein>